<proteinExistence type="evidence at protein level"/>
<sequence length="585" mass="64328">MDLPGDSSPPGQPRLCRQPLTRALWGARSPKRPRLQLPGAPSPLEKASRRVLAVVLEDVMAVHMVPVVPSKQTSIPQHHSYHQDPVHRQPPASPPRQAGWSSQARPPDPLCLCREPLSRIHRTSSTLRRRSRTTPGPEEGPSQKVDRAPQPTLVVMLEDIASPRPPAEGFIDETPNFIIPAQRAEPMRIVRQPTPPPGDLEPPFQPSALPADPLESPPTAPDPALELPSTPPPSSLLRPRLSPWGLAPLFRSVRSKLESFADIFLTPNKTPQPPPPSPPMKLELKIAISEAEQSGAAEGTASVSPRPPIRQWRTQDHNTPALLPKPSLGRSYSCPDLGPPGPGTCTWPPAPPQPSRPRPRRHTVGGGEMARAPPPPRPCLRKEVFPLGGVGASPSLTTSCSSTASTSFSEPAEPRLGSTKGKEPRASKDQVLSEPETKTMGKVSRFRIRRTPARPQLNLTPMGLPRPIRLNKKEFSLEEIYTNKNYQSPTTRRTFETIFEEPRERNGTLIFTSSRKLRRAVEFRDSSLPRSRRPSRGVRAAGGRTVPPNVAPSPDVGPLLQQRLEELDALLLEEETVDREQPHWT</sequence>
<feature type="chain" id="PRO_0000307269" description="Proline-rich protein 14">
    <location>
        <begin position="1"/>
        <end position="585"/>
    </location>
</feature>
<feature type="region of interest" description="Sufficient for heterochromatin association in interphase and chromatin association in anaphase" evidence="3">
    <location>
        <begin position="1"/>
        <end position="135"/>
    </location>
</feature>
<feature type="region of interest" description="Disordered" evidence="1">
    <location>
        <begin position="23"/>
        <end position="46"/>
    </location>
</feature>
<feature type="region of interest" description="Disordered" evidence="1">
    <location>
        <begin position="73"/>
        <end position="150"/>
    </location>
</feature>
<feature type="region of interest" description="Required for the interaction with GRB2 and sufficient to promote the phosphorylation of AKT and cell proliferation" evidence="4 5">
    <location>
        <begin position="85"/>
        <end position="378"/>
    </location>
</feature>
<feature type="region of interest" description="Required for nuclear lamina association" evidence="3">
    <location>
        <begin position="136"/>
        <end position="365"/>
    </location>
</feature>
<feature type="region of interest" description="Disordered" evidence="1">
    <location>
        <begin position="189"/>
        <end position="241"/>
    </location>
</feature>
<feature type="region of interest" description="Disordered" evidence="1">
    <location>
        <begin position="290"/>
        <end position="445"/>
    </location>
</feature>
<feature type="region of interest" description="Required for nuclear localization" evidence="3">
    <location>
        <begin position="518"/>
        <end position="535"/>
    </location>
</feature>
<feature type="region of interest" description="Disordered" evidence="1">
    <location>
        <begin position="525"/>
        <end position="557"/>
    </location>
</feature>
<feature type="compositionally biased region" description="Basic residues" evidence="1">
    <location>
        <begin position="119"/>
        <end position="132"/>
    </location>
</feature>
<feature type="compositionally biased region" description="Pro residues" evidence="1">
    <location>
        <begin position="193"/>
        <end position="205"/>
    </location>
</feature>
<feature type="compositionally biased region" description="Pro residues" evidence="1">
    <location>
        <begin position="337"/>
        <end position="356"/>
    </location>
</feature>
<feature type="compositionally biased region" description="Low complexity" evidence="1">
    <location>
        <begin position="393"/>
        <end position="409"/>
    </location>
</feature>
<feature type="modified residue" description="N-acetylmethionine" evidence="6">
    <location>
        <position position="1"/>
    </location>
</feature>
<feature type="modified residue" description="Phosphoserine" evidence="7">
    <location>
        <position position="277"/>
    </location>
</feature>
<feature type="sequence variant" id="VAR_035389" description="In dbSNP:rs3747481." evidence="2">
    <original>P</original>
    <variation>L</variation>
    <location>
        <position position="359"/>
    </location>
</feature>
<feature type="mutagenesis site" description="Loss of heterochromatin association. Loss of interaction with CBX5." evidence="3 4">
    <original>VV</original>
    <variation>AA</variation>
    <location>
        <begin position="54"/>
        <end position="55"/>
    </location>
</feature>
<feature type="mutagenesis site" description="Loss of heterochromatin association during interphase and loss of chromatin association during anaphase." evidence="3">
    <original>VV</original>
    <variation>EE</variation>
    <location>
        <begin position="54"/>
        <end position="55"/>
    </location>
</feature>
<feature type="mutagenesis site" description="Increased binding to GRB2 and enhanced cell proliferation." evidence="5">
    <original>S</original>
    <variation>C</variation>
    <location>
        <position position="101"/>
    </location>
</feature>
<feature type="mutagenesis site" description="Increased binding to GRB2 and enhanced cell proliferation." evidence="5">
    <original>E</original>
    <variation>K</variation>
    <location>
        <position position="566"/>
    </location>
</feature>
<organism>
    <name type="scientific">Homo sapiens</name>
    <name type="common">Human</name>
    <dbReference type="NCBI Taxonomy" id="9606"/>
    <lineage>
        <taxon>Eukaryota</taxon>
        <taxon>Metazoa</taxon>
        <taxon>Chordata</taxon>
        <taxon>Craniata</taxon>
        <taxon>Vertebrata</taxon>
        <taxon>Euteleostomi</taxon>
        <taxon>Mammalia</taxon>
        <taxon>Eutheria</taxon>
        <taxon>Euarchontoglires</taxon>
        <taxon>Primates</taxon>
        <taxon>Haplorrhini</taxon>
        <taxon>Catarrhini</taxon>
        <taxon>Hominidae</taxon>
        <taxon>Homo</taxon>
    </lineage>
</organism>
<comment type="function">
    <text evidence="3 4 5">Functions in tethering peripheral heterochromatin to the nuclear lamina during interphase, possibly through the interaction with heterochromatin protein CBX5/HP1 alpha (PubMed:24209742). Might play a role in reattaching heterochromatin to the nuclear lamina at mitotic exit (PubMed:24209742). Promotes myoblast differentiation during skeletal myogenesis, possibly by stimulating transcription factor MyoD activity via binding to CBX5/HP1 alpha (PubMed:25906157). Involved in the positive regulation of the PI3K-Akt-mTOR signaling pathway and in promoting cell proliferation, possibly via binding to GRB2 (PubMed:27041574).</text>
</comment>
<comment type="subunit">
    <text evidence="4 5">Interacts (via proline-rich region) with GRB2 (via SH3 domain 2) (PubMed:27041574). Interacts (via N-terminus) with CBX5 (PubMed:25906157).</text>
</comment>
<comment type="interaction">
    <interactant intactId="EBI-748167">
        <id>Q9BWN1</id>
    </interactant>
    <interactant intactId="EBI-78176">
        <id>Q13185</id>
        <label>CBX3</label>
    </interactant>
    <organismsDiffer>false</organismsDiffer>
    <experiments>7</experiments>
</comment>
<comment type="interaction">
    <interactant intactId="EBI-748167">
        <id>Q9BWN1</id>
    </interactant>
    <interactant intactId="EBI-78219">
        <id>P45973</id>
        <label>CBX5</label>
    </interactant>
    <organismsDiffer>false</organismsDiffer>
    <experiments>12</experiments>
</comment>
<comment type="subcellular location">
    <subcellularLocation>
        <location evidence="3">Chromosome</location>
    </subcellularLocation>
    <subcellularLocation>
        <location evidence="4">Nucleus</location>
    </subcellularLocation>
    <subcellularLocation>
        <location evidence="3">Nucleus lamina</location>
    </subcellularLocation>
    <subcellularLocation>
        <location evidence="3">Nucleus</location>
        <location evidence="3">Nucleoplasm</location>
    </subcellularLocation>
    <text evidence="3">During interphase, associated with peripheral heterochromatin at the nuclear lamina. Released from the nuclear lamina in mitotic prophase and remains highly dispersed in metaphase. Associates with chromatin at the onset of anaphase and relocalizes to the nuclear lamina in telophase.</text>
</comment>
<dbReference type="EMBL" id="AK074783">
    <property type="protein sequence ID" value="BAC11207.1"/>
    <property type="molecule type" value="mRNA"/>
</dbReference>
<dbReference type="EMBL" id="CH471192">
    <property type="protein sequence ID" value="EAW52222.1"/>
    <property type="molecule type" value="Genomic_DNA"/>
</dbReference>
<dbReference type="EMBL" id="BC000119">
    <property type="protein sequence ID" value="AAH00119.1"/>
    <property type="molecule type" value="mRNA"/>
</dbReference>
<dbReference type="EMBL" id="BC021934">
    <property type="protein sequence ID" value="AAH21934.1"/>
    <property type="molecule type" value="mRNA"/>
</dbReference>
<dbReference type="EMBL" id="BC050677">
    <property type="protein sequence ID" value="AAH50677.1"/>
    <property type="molecule type" value="mRNA"/>
</dbReference>
<dbReference type="CCDS" id="CCDS10687.1"/>
<dbReference type="RefSeq" id="NP_001307393.1">
    <property type="nucleotide sequence ID" value="NM_001320464.3"/>
</dbReference>
<dbReference type="RefSeq" id="NP_076936.1">
    <property type="nucleotide sequence ID" value="NM_024031.5"/>
</dbReference>
<dbReference type="BioGRID" id="122465">
    <property type="interactions" value="41"/>
</dbReference>
<dbReference type="FunCoup" id="Q9BWN1">
    <property type="interactions" value="942"/>
</dbReference>
<dbReference type="IntAct" id="Q9BWN1">
    <property type="interactions" value="31"/>
</dbReference>
<dbReference type="MINT" id="Q9BWN1"/>
<dbReference type="STRING" id="9606.ENSP00000441641"/>
<dbReference type="GlyGen" id="Q9BWN1">
    <property type="glycosylation" value="1 site, 1 O-linked glycan (1 site)"/>
</dbReference>
<dbReference type="iPTMnet" id="Q9BWN1"/>
<dbReference type="PhosphoSitePlus" id="Q9BWN1"/>
<dbReference type="BioMuta" id="PRR14"/>
<dbReference type="DMDM" id="74733447"/>
<dbReference type="jPOST" id="Q9BWN1"/>
<dbReference type="MassIVE" id="Q9BWN1"/>
<dbReference type="PaxDb" id="9606-ENSP00000441641"/>
<dbReference type="PeptideAtlas" id="Q9BWN1"/>
<dbReference type="ProteomicsDB" id="79294"/>
<dbReference type="Pumba" id="Q9BWN1"/>
<dbReference type="Antibodypedia" id="66800">
    <property type="antibodies" value="69 antibodies from 18 providers"/>
</dbReference>
<dbReference type="DNASU" id="78994"/>
<dbReference type="Ensembl" id="ENST00000300835.9">
    <property type="protein sequence ID" value="ENSP00000300835.4"/>
    <property type="gene ID" value="ENSG00000156858.12"/>
</dbReference>
<dbReference type="Ensembl" id="ENST00000542965.2">
    <property type="protein sequence ID" value="ENSP00000441641.2"/>
    <property type="gene ID" value="ENSG00000156858.12"/>
</dbReference>
<dbReference type="GeneID" id="78994"/>
<dbReference type="KEGG" id="hsa:78994"/>
<dbReference type="MANE-Select" id="ENST00000300835.9">
    <property type="protein sequence ID" value="ENSP00000300835.4"/>
    <property type="RefSeq nucleotide sequence ID" value="NM_024031.5"/>
    <property type="RefSeq protein sequence ID" value="NP_076936.1"/>
</dbReference>
<dbReference type="UCSC" id="uc002dyy.4">
    <property type="organism name" value="human"/>
</dbReference>
<dbReference type="AGR" id="HGNC:28458"/>
<dbReference type="CTD" id="78994"/>
<dbReference type="DisGeNET" id="78994"/>
<dbReference type="GeneCards" id="PRR14"/>
<dbReference type="HGNC" id="HGNC:28458">
    <property type="gene designation" value="PRR14"/>
</dbReference>
<dbReference type="HPA" id="ENSG00000156858">
    <property type="expression patterns" value="Low tissue specificity"/>
</dbReference>
<dbReference type="MIM" id="617423">
    <property type="type" value="gene"/>
</dbReference>
<dbReference type="neXtProt" id="NX_Q9BWN1"/>
<dbReference type="OpenTargets" id="ENSG00000156858"/>
<dbReference type="PharmGKB" id="PA144596393"/>
<dbReference type="VEuPathDB" id="HostDB:ENSG00000156858"/>
<dbReference type="eggNOG" id="ENOG502RJ6E">
    <property type="taxonomic scope" value="Eukaryota"/>
</dbReference>
<dbReference type="GeneTree" id="ENSGT00520000055626"/>
<dbReference type="HOGENOM" id="CLU_489653_0_0_1"/>
<dbReference type="InParanoid" id="Q9BWN1"/>
<dbReference type="OMA" id="MRIVHQP"/>
<dbReference type="OrthoDB" id="6163216at2759"/>
<dbReference type="PAN-GO" id="Q9BWN1">
    <property type="GO annotations" value="1 GO annotation based on evolutionary models"/>
</dbReference>
<dbReference type="PhylomeDB" id="Q9BWN1"/>
<dbReference type="TreeFam" id="TF328446"/>
<dbReference type="PathwayCommons" id="Q9BWN1"/>
<dbReference type="SignaLink" id="Q9BWN1"/>
<dbReference type="BioGRID-ORCS" id="78994">
    <property type="hits" value="12 hits in 1158 CRISPR screens"/>
</dbReference>
<dbReference type="ChiTaRS" id="PRR14">
    <property type="organism name" value="human"/>
</dbReference>
<dbReference type="GenomeRNAi" id="78994"/>
<dbReference type="Pharos" id="Q9BWN1">
    <property type="development level" value="Tbio"/>
</dbReference>
<dbReference type="PRO" id="PR:Q9BWN1"/>
<dbReference type="Proteomes" id="UP000005640">
    <property type="component" value="Chromosome 16"/>
</dbReference>
<dbReference type="RNAct" id="Q9BWN1">
    <property type="molecule type" value="protein"/>
</dbReference>
<dbReference type="Bgee" id="ENSG00000156858">
    <property type="expression patterns" value="Expressed in granulocyte and 197 other cell types or tissues"/>
</dbReference>
<dbReference type="ExpressionAtlas" id="Q9BWN1">
    <property type="expression patterns" value="baseline and differential"/>
</dbReference>
<dbReference type="GO" id="GO:0005694">
    <property type="term" value="C:chromosome"/>
    <property type="evidence" value="ECO:0007669"/>
    <property type="project" value="UniProtKB-SubCell"/>
</dbReference>
<dbReference type="GO" id="GO:0005652">
    <property type="term" value="C:nuclear lamina"/>
    <property type="evidence" value="ECO:0007669"/>
    <property type="project" value="UniProtKB-SubCell"/>
</dbReference>
<dbReference type="GO" id="GO:0005654">
    <property type="term" value="C:nucleoplasm"/>
    <property type="evidence" value="ECO:0000314"/>
    <property type="project" value="HPA"/>
</dbReference>
<dbReference type="GO" id="GO:0007517">
    <property type="term" value="P:muscle organ development"/>
    <property type="evidence" value="ECO:0007669"/>
    <property type="project" value="UniProtKB-KW"/>
</dbReference>
<dbReference type="InterPro" id="IPR026320">
    <property type="entry name" value="PRR14"/>
</dbReference>
<dbReference type="InterPro" id="IPR028149">
    <property type="entry name" value="Tantalus-like"/>
</dbReference>
<dbReference type="PANTHER" id="PTHR14522">
    <property type="entry name" value="EMO2-RELATED"/>
    <property type="match status" value="1"/>
</dbReference>
<dbReference type="PANTHER" id="PTHR14522:SF2">
    <property type="entry name" value="PROLINE-RICH PROTEIN 14"/>
    <property type="match status" value="1"/>
</dbReference>
<dbReference type="Pfam" id="PF15386">
    <property type="entry name" value="Tantalus"/>
    <property type="match status" value="1"/>
</dbReference>
<protein>
    <recommendedName>
        <fullName>Proline-rich protein 14</fullName>
    </recommendedName>
</protein>
<accession>Q9BWN1</accession>
<accession>Q8WTX2</accession>
<keyword id="KW-0007">Acetylation</keyword>
<keyword id="KW-0158">Chromosome</keyword>
<keyword id="KW-0517">Myogenesis</keyword>
<keyword id="KW-0539">Nucleus</keyword>
<keyword id="KW-0597">Phosphoprotein</keyword>
<keyword id="KW-1267">Proteomics identification</keyword>
<keyword id="KW-1185">Reference proteome</keyword>
<reference key="1">
    <citation type="journal article" date="2004" name="Nat. Genet.">
        <title>Complete sequencing and characterization of 21,243 full-length human cDNAs.</title>
        <authorList>
            <person name="Ota T."/>
            <person name="Suzuki Y."/>
            <person name="Nishikawa T."/>
            <person name="Otsuki T."/>
            <person name="Sugiyama T."/>
            <person name="Irie R."/>
            <person name="Wakamatsu A."/>
            <person name="Hayashi K."/>
            <person name="Sato H."/>
            <person name="Nagai K."/>
            <person name="Kimura K."/>
            <person name="Makita H."/>
            <person name="Sekine M."/>
            <person name="Obayashi M."/>
            <person name="Nishi T."/>
            <person name="Shibahara T."/>
            <person name="Tanaka T."/>
            <person name="Ishii S."/>
            <person name="Yamamoto J."/>
            <person name="Saito K."/>
            <person name="Kawai Y."/>
            <person name="Isono Y."/>
            <person name="Nakamura Y."/>
            <person name="Nagahari K."/>
            <person name="Murakami K."/>
            <person name="Yasuda T."/>
            <person name="Iwayanagi T."/>
            <person name="Wagatsuma M."/>
            <person name="Shiratori A."/>
            <person name="Sudo H."/>
            <person name="Hosoiri T."/>
            <person name="Kaku Y."/>
            <person name="Kodaira H."/>
            <person name="Kondo H."/>
            <person name="Sugawara M."/>
            <person name="Takahashi M."/>
            <person name="Kanda K."/>
            <person name="Yokoi T."/>
            <person name="Furuya T."/>
            <person name="Kikkawa E."/>
            <person name="Omura Y."/>
            <person name="Abe K."/>
            <person name="Kamihara K."/>
            <person name="Katsuta N."/>
            <person name="Sato K."/>
            <person name="Tanikawa M."/>
            <person name="Yamazaki M."/>
            <person name="Ninomiya K."/>
            <person name="Ishibashi T."/>
            <person name="Yamashita H."/>
            <person name="Murakawa K."/>
            <person name="Fujimori K."/>
            <person name="Tanai H."/>
            <person name="Kimata M."/>
            <person name="Watanabe M."/>
            <person name="Hiraoka S."/>
            <person name="Chiba Y."/>
            <person name="Ishida S."/>
            <person name="Ono Y."/>
            <person name="Takiguchi S."/>
            <person name="Watanabe S."/>
            <person name="Yosida M."/>
            <person name="Hotuta T."/>
            <person name="Kusano J."/>
            <person name="Kanehori K."/>
            <person name="Takahashi-Fujii A."/>
            <person name="Hara H."/>
            <person name="Tanase T.-O."/>
            <person name="Nomura Y."/>
            <person name="Togiya S."/>
            <person name="Komai F."/>
            <person name="Hara R."/>
            <person name="Takeuchi K."/>
            <person name="Arita M."/>
            <person name="Imose N."/>
            <person name="Musashino K."/>
            <person name="Yuuki H."/>
            <person name="Oshima A."/>
            <person name="Sasaki N."/>
            <person name="Aotsuka S."/>
            <person name="Yoshikawa Y."/>
            <person name="Matsunawa H."/>
            <person name="Ichihara T."/>
            <person name="Shiohata N."/>
            <person name="Sano S."/>
            <person name="Moriya S."/>
            <person name="Momiyama H."/>
            <person name="Satoh N."/>
            <person name="Takami S."/>
            <person name="Terashima Y."/>
            <person name="Suzuki O."/>
            <person name="Nakagawa S."/>
            <person name="Senoh A."/>
            <person name="Mizoguchi H."/>
            <person name="Goto Y."/>
            <person name="Shimizu F."/>
            <person name="Wakebe H."/>
            <person name="Hishigaki H."/>
            <person name="Watanabe T."/>
            <person name="Sugiyama A."/>
            <person name="Takemoto M."/>
            <person name="Kawakami B."/>
            <person name="Yamazaki M."/>
            <person name="Watanabe K."/>
            <person name="Kumagai A."/>
            <person name="Itakura S."/>
            <person name="Fukuzumi Y."/>
            <person name="Fujimori Y."/>
            <person name="Komiyama M."/>
            <person name="Tashiro H."/>
            <person name="Tanigami A."/>
            <person name="Fujiwara T."/>
            <person name="Ono T."/>
            <person name="Yamada K."/>
            <person name="Fujii Y."/>
            <person name="Ozaki K."/>
            <person name="Hirao M."/>
            <person name="Ohmori Y."/>
            <person name="Kawabata A."/>
            <person name="Hikiji T."/>
            <person name="Kobatake N."/>
            <person name="Inagaki H."/>
            <person name="Ikema Y."/>
            <person name="Okamoto S."/>
            <person name="Okitani R."/>
            <person name="Kawakami T."/>
            <person name="Noguchi S."/>
            <person name="Itoh T."/>
            <person name="Shigeta K."/>
            <person name="Senba T."/>
            <person name="Matsumura K."/>
            <person name="Nakajima Y."/>
            <person name="Mizuno T."/>
            <person name="Morinaga M."/>
            <person name="Sasaki M."/>
            <person name="Togashi T."/>
            <person name="Oyama M."/>
            <person name="Hata H."/>
            <person name="Watanabe M."/>
            <person name="Komatsu T."/>
            <person name="Mizushima-Sugano J."/>
            <person name="Satoh T."/>
            <person name="Shirai Y."/>
            <person name="Takahashi Y."/>
            <person name="Nakagawa K."/>
            <person name="Okumura K."/>
            <person name="Nagase T."/>
            <person name="Nomura N."/>
            <person name="Kikuchi H."/>
            <person name="Masuho Y."/>
            <person name="Yamashita R."/>
            <person name="Nakai K."/>
            <person name="Yada T."/>
            <person name="Nakamura Y."/>
            <person name="Ohara O."/>
            <person name="Isogai T."/>
            <person name="Sugano S."/>
        </authorList>
    </citation>
    <scope>NUCLEOTIDE SEQUENCE [LARGE SCALE MRNA]</scope>
</reference>
<reference key="2">
    <citation type="submission" date="2005-07" db="EMBL/GenBank/DDBJ databases">
        <authorList>
            <person name="Mural R.J."/>
            <person name="Istrail S."/>
            <person name="Sutton G.G."/>
            <person name="Florea L."/>
            <person name="Halpern A.L."/>
            <person name="Mobarry C.M."/>
            <person name="Lippert R."/>
            <person name="Walenz B."/>
            <person name="Shatkay H."/>
            <person name="Dew I."/>
            <person name="Miller J.R."/>
            <person name="Flanigan M.J."/>
            <person name="Edwards N.J."/>
            <person name="Bolanos R."/>
            <person name="Fasulo D."/>
            <person name="Halldorsson B.V."/>
            <person name="Hannenhalli S."/>
            <person name="Turner R."/>
            <person name="Yooseph S."/>
            <person name="Lu F."/>
            <person name="Nusskern D.R."/>
            <person name="Shue B.C."/>
            <person name="Zheng X.H."/>
            <person name="Zhong F."/>
            <person name="Delcher A.L."/>
            <person name="Huson D.H."/>
            <person name="Kravitz S.A."/>
            <person name="Mouchard L."/>
            <person name="Reinert K."/>
            <person name="Remington K.A."/>
            <person name="Clark A.G."/>
            <person name="Waterman M.S."/>
            <person name="Eichler E.E."/>
            <person name="Adams M.D."/>
            <person name="Hunkapiller M.W."/>
            <person name="Myers E.W."/>
            <person name="Venter J.C."/>
        </authorList>
    </citation>
    <scope>NUCLEOTIDE SEQUENCE [LARGE SCALE GENOMIC DNA]</scope>
</reference>
<reference key="3">
    <citation type="journal article" date="2004" name="Genome Res.">
        <title>The status, quality, and expansion of the NIH full-length cDNA project: the Mammalian Gene Collection (MGC).</title>
        <authorList>
            <consortium name="The MGC Project Team"/>
        </authorList>
    </citation>
    <scope>NUCLEOTIDE SEQUENCE [LARGE SCALE MRNA]</scope>
    <scope>VARIANT LEU-359</scope>
    <source>
        <tissue>Eye</tissue>
        <tissue>Pancreas</tissue>
    </source>
</reference>
<reference key="4">
    <citation type="journal article" date="2012" name="Proc. Natl. Acad. Sci. U.S.A.">
        <title>N-terminal acetylome analyses and functional insights of the N-terminal acetyltransferase NatB.</title>
        <authorList>
            <person name="Van Damme P."/>
            <person name="Lasa M."/>
            <person name="Polevoda B."/>
            <person name="Gazquez C."/>
            <person name="Elosegui-Artola A."/>
            <person name="Kim D.S."/>
            <person name="De Juan-Pardo E."/>
            <person name="Demeyer K."/>
            <person name="Hole K."/>
            <person name="Larrea E."/>
            <person name="Timmerman E."/>
            <person name="Prieto J."/>
            <person name="Arnesen T."/>
            <person name="Sherman F."/>
            <person name="Gevaert K."/>
            <person name="Aldabe R."/>
        </authorList>
    </citation>
    <scope>ACETYLATION [LARGE SCALE ANALYSIS] AT MET-1</scope>
    <scope>IDENTIFICATION BY MASS SPECTROMETRY [LARGE SCALE ANALYSIS]</scope>
</reference>
<reference key="5">
    <citation type="journal article" date="2013" name="Cell Rep.">
        <title>The human protein PRR14 tethers heterochromatin to the nuclear lamina during interphase and mitotic exit.</title>
        <authorList>
            <person name="Poleshko A."/>
            <person name="Mansfield K.M."/>
            <person name="Burlingame C.C."/>
            <person name="Andrake M.D."/>
            <person name="Shah N.R."/>
            <person name="Katz R.A."/>
        </authorList>
    </citation>
    <scope>FUNCTION</scope>
    <scope>SUBCELLULAR LOCATION</scope>
    <scope>MUTAGENESIS OF 54-VAL-VAL-55</scope>
</reference>
<reference key="6">
    <citation type="journal article" date="2013" name="J. Proteome Res.">
        <title>Toward a comprehensive characterization of a human cancer cell phosphoproteome.</title>
        <authorList>
            <person name="Zhou H."/>
            <person name="Di Palma S."/>
            <person name="Preisinger C."/>
            <person name="Peng M."/>
            <person name="Polat A.N."/>
            <person name="Heck A.J."/>
            <person name="Mohammed S."/>
        </authorList>
    </citation>
    <scope>IDENTIFICATION BY MASS SPECTROMETRY [LARGE SCALE ANALYSIS]</scope>
    <source>
        <tissue>Erythroleukemia</tissue>
    </source>
</reference>
<reference key="7">
    <citation type="journal article" date="2014" name="J. Proteomics">
        <title>An enzyme assisted RP-RPLC approach for in-depth analysis of human liver phosphoproteome.</title>
        <authorList>
            <person name="Bian Y."/>
            <person name="Song C."/>
            <person name="Cheng K."/>
            <person name="Dong M."/>
            <person name="Wang F."/>
            <person name="Huang J."/>
            <person name="Sun D."/>
            <person name="Wang L."/>
            <person name="Ye M."/>
            <person name="Zou H."/>
        </authorList>
    </citation>
    <scope>PHOSPHORYLATION [LARGE SCALE ANALYSIS] AT SER-277</scope>
    <scope>IDENTIFICATION BY MASS SPECTROMETRY [LARGE SCALE ANALYSIS]</scope>
    <source>
        <tissue>Liver</tissue>
    </source>
</reference>
<reference key="8">
    <citation type="journal article" date="2015" name="Cell Death Dis.">
        <title>A novel role of PRR14 in the regulation of skeletal myogenesis.</title>
        <authorList>
            <person name="Yang M."/>
            <person name="Yuan Z.M."/>
        </authorList>
    </citation>
    <scope>FUNCTION</scope>
    <scope>SUBCELLULAR LOCATION</scope>
    <scope>INTERACTION WITH CBX5</scope>
    <scope>MUTAGENESIS OF 54-VAL-VAL-55</scope>
</reference>
<reference key="9">
    <citation type="journal article" date="2016" name="Oncogene">
        <title>PRR14 is a novel activator of the PI3K pathway promoting lung carcinogenesis.</title>
        <authorList>
            <person name="Yang M."/>
            <person name="Lewinska M."/>
            <person name="Fan X."/>
            <person name="Zhu J."/>
            <person name="Yuan Z.M."/>
        </authorList>
    </citation>
    <scope>FUNCTION</scope>
    <scope>INTERACTION WITH GRB2</scope>
    <scope>MUTAGENESIS OF SER-101 AND GLU-566</scope>
</reference>
<evidence type="ECO:0000256" key="1">
    <source>
        <dbReference type="SAM" id="MobiDB-lite"/>
    </source>
</evidence>
<evidence type="ECO:0000269" key="2">
    <source>
    </source>
</evidence>
<evidence type="ECO:0000269" key="3">
    <source>
    </source>
</evidence>
<evidence type="ECO:0000269" key="4">
    <source>
    </source>
</evidence>
<evidence type="ECO:0000269" key="5">
    <source>
    </source>
</evidence>
<evidence type="ECO:0007744" key="6">
    <source>
    </source>
</evidence>
<evidence type="ECO:0007744" key="7">
    <source>
    </source>
</evidence>
<name>PRR14_HUMAN</name>
<gene>
    <name type="primary">PRR14</name>
</gene>